<gene>
    <name evidence="1" type="primary">rsmC</name>
    <name type="ordered locus">ETA_06060</name>
</gene>
<sequence>MSAFTPASEVILRHSDEFTQRRVLFAGDLQDDLPAQLETALSRVHTQQYHHWQILSRVLGENAHYGLFASAETLADCDTLVYYWPKNKPEAQYQLQNLLALLPVGSDIFVVGENRSGVRSAEQMVADWAKLEKIDSARRCGLYHGRLDSRPTFDADTFWDEYPLGELTVKTLPGVFSRDGLDIGSQLLLSTLKPHMKGKVLDVGCGAGVLSAMLASFSPKVRLTLTDVNAAAIASSKATLAANQLEGDVFASNVYSDISGRFDMIISNPPFHDGVQTSLDAAQTLIRGAVSHLNTGGELRIVANAFLPYPQVLDETFGSHEVLLQNGRFKVYRAVKSRAAKK</sequence>
<reference key="1">
    <citation type="journal article" date="2008" name="Environ. Microbiol.">
        <title>The genome of Erwinia tasmaniensis strain Et1/99, a non-pathogenic bacterium in the genus Erwinia.</title>
        <authorList>
            <person name="Kube M."/>
            <person name="Migdoll A.M."/>
            <person name="Mueller I."/>
            <person name="Kuhl H."/>
            <person name="Beck A."/>
            <person name="Reinhardt R."/>
            <person name="Geider K."/>
        </authorList>
    </citation>
    <scope>NUCLEOTIDE SEQUENCE [LARGE SCALE GENOMIC DNA]</scope>
    <source>
        <strain>DSM 17950 / CFBP 7177 / CIP 109463 / NCPPB 4357 / Et1/99</strain>
    </source>
</reference>
<protein>
    <recommendedName>
        <fullName evidence="1">Ribosomal RNA small subunit methyltransferase C</fullName>
        <ecNumber evidence="1">2.1.1.172</ecNumber>
    </recommendedName>
    <alternativeName>
        <fullName evidence="1">16S rRNA m2G1207 methyltransferase</fullName>
    </alternativeName>
    <alternativeName>
        <fullName evidence="1">rRNA (guanine-N(2)-)-methyltransferase RsmC</fullName>
    </alternativeName>
</protein>
<proteinExistence type="inferred from homology"/>
<organism>
    <name type="scientific">Erwinia tasmaniensis (strain DSM 17950 / CFBP 7177 / CIP 109463 / NCPPB 4357 / Et1/99)</name>
    <dbReference type="NCBI Taxonomy" id="465817"/>
    <lineage>
        <taxon>Bacteria</taxon>
        <taxon>Pseudomonadati</taxon>
        <taxon>Pseudomonadota</taxon>
        <taxon>Gammaproteobacteria</taxon>
        <taxon>Enterobacterales</taxon>
        <taxon>Erwiniaceae</taxon>
        <taxon>Erwinia</taxon>
    </lineage>
</organism>
<name>RSMC_ERWT9</name>
<comment type="function">
    <text evidence="1">Specifically methylates the guanine in position 1207 of 16S rRNA in the 30S particle.</text>
</comment>
<comment type="catalytic activity">
    <reaction evidence="1">
        <text>guanosine(1207) in 16S rRNA + S-adenosyl-L-methionine = N(2)-methylguanosine(1207) in 16S rRNA + S-adenosyl-L-homocysteine + H(+)</text>
        <dbReference type="Rhea" id="RHEA:42736"/>
        <dbReference type="Rhea" id="RHEA-COMP:10213"/>
        <dbReference type="Rhea" id="RHEA-COMP:10214"/>
        <dbReference type="ChEBI" id="CHEBI:15378"/>
        <dbReference type="ChEBI" id="CHEBI:57856"/>
        <dbReference type="ChEBI" id="CHEBI:59789"/>
        <dbReference type="ChEBI" id="CHEBI:74269"/>
        <dbReference type="ChEBI" id="CHEBI:74481"/>
        <dbReference type="EC" id="2.1.1.172"/>
    </reaction>
</comment>
<comment type="subunit">
    <text evidence="1">Monomer.</text>
</comment>
<comment type="subcellular location">
    <subcellularLocation>
        <location evidence="1">Cytoplasm</location>
    </subcellularLocation>
</comment>
<comment type="similarity">
    <text evidence="1">Belongs to the methyltransferase superfamily. RsmC family.</text>
</comment>
<feature type="chain" id="PRO_0000369697" description="Ribosomal RNA small subunit methyltransferase C">
    <location>
        <begin position="1"/>
        <end position="342"/>
    </location>
</feature>
<accession>B2VH94</accession>
<evidence type="ECO:0000255" key="1">
    <source>
        <dbReference type="HAMAP-Rule" id="MF_01862"/>
    </source>
</evidence>
<keyword id="KW-0963">Cytoplasm</keyword>
<keyword id="KW-0489">Methyltransferase</keyword>
<keyword id="KW-1185">Reference proteome</keyword>
<keyword id="KW-0698">rRNA processing</keyword>
<keyword id="KW-0949">S-adenosyl-L-methionine</keyword>
<keyword id="KW-0808">Transferase</keyword>
<dbReference type="EC" id="2.1.1.172" evidence="1"/>
<dbReference type="EMBL" id="CU468135">
    <property type="protein sequence ID" value="CAO95652.1"/>
    <property type="molecule type" value="Genomic_DNA"/>
</dbReference>
<dbReference type="RefSeq" id="WP_012440355.1">
    <property type="nucleotide sequence ID" value="NC_010694.1"/>
</dbReference>
<dbReference type="SMR" id="B2VH94"/>
<dbReference type="STRING" id="465817.ETA_06060"/>
<dbReference type="KEGG" id="eta:ETA_06060"/>
<dbReference type="eggNOG" id="COG2813">
    <property type="taxonomic scope" value="Bacteria"/>
</dbReference>
<dbReference type="HOGENOM" id="CLU_049581_0_1_6"/>
<dbReference type="OrthoDB" id="9816072at2"/>
<dbReference type="Proteomes" id="UP000001726">
    <property type="component" value="Chromosome"/>
</dbReference>
<dbReference type="GO" id="GO:0005737">
    <property type="term" value="C:cytoplasm"/>
    <property type="evidence" value="ECO:0007669"/>
    <property type="project" value="UniProtKB-SubCell"/>
</dbReference>
<dbReference type="GO" id="GO:0052914">
    <property type="term" value="F:16S rRNA (guanine(1207)-N(2))-methyltransferase activity"/>
    <property type="evidence" value="ECO:0007669"/>
    <property type="project" value="UniProtKB-EC"/>
</dbReference>
<dbReference type="GO" id="GO:0003676">
    <property type="term" value="F:nucleic acid binding"/>
    <property type="evidence" value="ECO:0007669"/>
    <property type="project" value="InterPro"/>
</dbReference>
<dbReference type="CDD" id="cd02440">
    <property type="entry name" value="AdoMet_MTases"/>
    <property type="match status" value="1"/>
</dbReference>
<dbReference type="Gene3D" id="3.40.50.150">
    <property type="entry name" value="Vaccinia Virus protein VP39"/>
    <property type="match status" value="2"/>
</dbReference>
<dbReference type="HAMAP" id="MF_01862">
    <property type="entry name" value="16SrRNA_methyltr_C"/>
    <property type="match status" value="1"/>
</dbReference>
<dbReference type="InterPro" id="IPR002052">
    <property type="entry name" value="DNA_methylase_N6_adenine_CS"/>
</dbReference>
<dbReference type="InterPro" id="IPR013675">
    <property type="entry name" value="Mtase_sm_N"/>
</dbReference>
<dbReference type="InterPro" id="IPR023543">
    <property type="entry name" value="rRNA_ssu_MeTfrase_C"/>
</dbReference>
<dbReference type="InterPro" id="IPR046977">
    <property type="entry name" value="RsmC/RlmG"/>
</dbReference>
<dbReference type="InterPro" id="IPR029063">
    <property type="entry name" value="SAM-dependent_MTases_sf"/>
</dbReference>
<dbReference type="InterPro" id="IPR007848">
    <property type="entry name" value="Small_mtfrase_dom"/>
</dbReference>
<dbReference type="NCBIfam" id="NF007023">
    <property type="entry name" value="PRK09489.1"/>
    <property type="match status" value="1"/>
</dbReference>
<dbReference type="PANTHER" id="PTHR47816">
    <property type="entry name" value="RIBOSOMAL RNA SMALL SUBUNIT METHYLTRANSFERASE C"/>
    <property type="match status" value="1"/>
</dbReference>
<dbReference type="PANTHER" id="PTHR47816:SF4">
    <property type="entry name" value="RIBOSOMAL RNA SMALL SUBUNIT METHYLTRANSFERASE C"/>
    <property type="match status" value="1"/>
</dbReference>
<dbReference type="Pfam" id="PF05175">
    <property type="entry name" value="MTS"/>
    <property type="match status" value="1"/>
</dbReference>
<dbReference type="Pfam" id="PF08468">
    <property type="entry name" value="MTS_N"/>
    <property type="match status" value="1"/>
</dbReference>
<dbReference type="SUPFAM" id="SSF53335">
    <property type="entry name" value="S-adenosyl-L-methionine-dependent methyltransferases"/>
    <property type="match status" value="1"/>
</dbReference>